<reference key="1">
    <citation type="journal article" date="2001" name="Lancet">
        <title>Whole genome sequencing of meticillin-resistant Staphylococcus aureus.</title>
        <authorList>
            <person name="Kuroda M."/>
            <person name="Ohta T."/>
            <person name="Uchiyama I."/>
            <person name="Baba T."/>
            <person name="Yuzawa H."/>
            <person name="Kobayashi I."/>
            <person name="Cui L."/>
            <person name="Oguchi A."/>
            <person name="Aoki K."/>
            <person name="Nagai Y."/>
            <person name="Lian J.-Q."/>
            <person name="Ito T."/>
            <person name="Kanamori M."/>
            <person name="Matsumaru H."/>
            <person name="Maruyama A."/>
            <person name="Murakami H."/>
            <person name="Hosoyama A."/>
            <person name="Mizutani-Ui Y."/>
            <person name="Takahashi N.K."/>
            <person name="Sawano T."/>
            <person name="Inoue R."/>
            <person name="Kaito C."/>
            <person name="Sekimizu K."/>
            <person name="Hirakawa H."/>
            <person name="Kuhara S."/>
            <person name="Goto S."/>
            <person name="Yabuzaki J."/>
            <person name="Kanehisa M."/>
            <person name="Yamashita A."/>
            <person name="Oshima K."/>
            <person name="Furuya K."/>
            <person name="Yoshino C."/>
            <person name="Shiba T."/>
            <person name="Hattori M."/>
            <person name="Ogasawara N."/>
            <person name="Hayashi H."/>
            <person name="Hiramatsu K."/>
        </authorList>
    </citation>
    <scope>NUCLEOTIDE SEQUENCE [LARGE SCALE GENOMIC DNA]</scope>
    <source>
        <strain>Mu50 / ATCC 700699</strain>
    </source>
</reference>
<feature type="chain" id="PRO_0000168388" description="L-lactate dehydrogenase 2">
    <location>
        <begin position="1"/>
        <end position="319"/>
    </location>
</feature>
<feature type="active site" description="Proton acceptor" evidence="2">
    <location>
        <position position="178"/>
    </location>
</feature>
<feature type="binding site" evidence="2">
    <location>
        <position position="16"/>
    </location>
    <ligand>
        <name>NAD(+)</name>
        <dbReference type="ChEBI" id="CHEBI:57540"/>
    </ligand>
</feature>
<feature type="binding site" evidence="2">
    <location>
        <position position="37"/>
    </location>
    <ligand>
        <name>NAD(+)</name>
        <dbReference type="ChEBI" id="CHEBI:57540"/>
    </ligand>
</feature>
<feature type="binding site" evidence="2">
    <location>
        <position position="42"/>
    </location>
    <ligand>
        <name>NAD(+)</name>
        <dbReference type="ChEBI" id="CHEBI:57540"/>
    </ligand>
</feature>
<feature type="binding site" evidence="2">
    <location>
        <position position="68"/>
    </location>
    <ligand>
        <name>NAD(+)</name>
        <dbReference type="ChEBI" id="CHEBI:57540"/>
    </ligand>
</feature>
<feature type="binding site" evidence="2">
    <location>
        <begin position="82"/>
        <end position="83"/>
    </location>
    <ligand>
        <name>NAD(+)</name>
        <dbReference type="ChEBI" id="CHEBI:57540"/>
    </ligand>
</feature>
<feature type="binding site" evidence="2">
    <location>
        <position position="85"/>
    </location>
    <ligand>
        <name>substrate</name>
    </ligand>
</feature>
<feature type="binding site" evidence="2">
    <location>
        <position position="91"/>
    </location>
    <ligand>
        <name>substrate</name>
    </ligand>
</feature>
<feature type="binding site" evidence="2">
    <location>
        <position position="104"/>
    </location>
    <ligand>
        <name>NAD(+)</name>
        <dbReference type="ChEBI" id="CHEBI:57540"/>
    </ligand>
</feature>
<feature type="binding site" evidence="2">
    <location>
        <begin position="121"/>
        <end position="123"/>
    </location>
    <ligand>
        <name>NAD(+)</name>
        <dbReference type="ChEBI" id="CHEBI:57540"/>
    </ligand>
</feature>
<feature type="binding site" evidence="2">
    <location>
        <begin position="123"/>
        <end position="126"/>
    </location>
    <ligand>
        <name>substrate</name>
    </ligand>
</feature>
<feature type="binding site" evidence="2">
    <location>
        <position position="146"/>
    </location>
    <ligand>
        <name>NAD(+)</name>
        <dbReference type="ChEBI" id="CHEBI:57540"/>
    </ligand>
</feature>
<feature type="binding site" evidence="2">
    <location>
        <begin position="151"/>
        <end position="154"/>
    </location>
    <ligand>
        <name>substrate</name>
    </ligand>
</feature>
<feature type="binding site" evidence="2">
    <location>
        <position position="231"/>
    </location>
    <ligand>
        <name>substrate</name>
    </ligand>
</feature>
<feature type="modified residue" description="Phosphotyrosine" evidence="2">
    <location>
        <position position="222"/>
    </location>
</feature>
<gene>
    <name evidence="2" type="primary">ldh2</name>
    <name type="synonym">ldhB</name>
    <name type="ordered locus">SAV2602</name>
</gene>
<keyword id="KW-0963">Cytoplasm</keyword>
<keyword id="KW-0520">NAD</keyword>
<keyword id="KW-0560">Oxidoreductase</keyword>
<keyword id="KW-0597">Phosphoprotein</keyword>
<keyword id="KW-0346">Stress response</keyword>
<evidence type="ECO:0000250" key="1">
    <source>
        <dbReference type="UniProtKB" id="Q5HCV0"/>
    </source>
</evidence>
<evidence type="ECO:0000255" key="2">
    <source>
        <dbReference type="HAMAP-Rule" id="MF_00488"/>
    </source>
</evidence>
<evidence type="ECO:0000305" key="3"/>
<name>LDH2_STAAM</name>
<comment type="function">
    <text evidence="1 2">Catalyzes the conversion of lactate to pyruvate (Potential). Contributes to S.aureus growth during nitrosative stress in both aerobically and anaerobically cultured cells, despite playing a secondary role in this resistance mechanism (By similarity).</text>
</comment>
<comment type="catalytic activity">
    <reaction evidence="2">
        <text>(S)-lactate + NAD(+) = pyruvate + NADH + H(+)</text>
        <dbReference type="Rhea" id="RHEA:23444"/>
        <dbReference type="ChEBI" id="CHEBI:15361"/>
        <dbReference type="ChEBI" id="CHEBI:15378"/>
        <dbReference type="ChEBI" id="CHEBI:16651"/>
        <dbReference type="ChEBI" id="CHEBI:57540"/>
        <dbReference type="ChEBI" id="CHEBI:57945"/>
        <dbReference type="EC" id="1.1.1.27"/>
    </reaction>
</comment>
<comment type="pathway">
    <text evidence="2">Fermentation; pyruvate fermentation to lactate; (S)-lactate from pyruvate: step 1/1.</text>
</comment>
<comment type="subunit">
    <text evidence="2">Homotetramer.</text>
</comment>
<comment type="subcellular location">
    <subcellularLocation>
        <location evidence="2">Cytoplasm</location>
    </subcellularLocation>
</comment>
<comment type="similarity">
    <text evidence="2 3">Belongs to the LDH/MDH superfamily. LDH family.</text>
</comment>
<proteinExistence type="inferred from homology"/>
<protein>
    <recommendedName>
        <fullName evidence="2">L-lactate dehydrogenase 2</fullName>
        <shortName evidence="2">L-LDH 2</shortName>
        <ecNumber evidence="2">1.1.1.27</ecNumber>
    </recommendedName>
</protein>
<dbReference type="EC" id="1.1.1.27" evidence="2"/>
<dbReference type="EMBL" id="BA000017">
    <property type="protein sequence ID" value="BAB58764.1"/>
    <property type="molecule type" value="Genomic_DNA"/>
</dbReference>
<dbReference type="RefSeq" id="WP_000846636.1">
    <property type="nucleotide sequence ID" value="NC_002758.2"/>
</dbReference>
<dbReference type="SMR" id="P65258"/>
<dbReference type="KEGG" id="sav:SAV2602"/>
<dbReference type="HOGENOM" id="CLU_045401_1_1_9"/>
<dbReference type="PhylomeDB" id="P65258"/>
<dbReference type="UniPathway" id="UPA00554">
    <property type="reaction ID" value="UER00611"/>
</dbReference>
<dbReference type="Proteomes" id="UP000002481">
    <property type="component" value="Chromosome"/>
</dbReference>
<dbReference type="GO" id="GO:0005737">
    <property type="term" value="C:cytoplasm"/>
    <property type="evidence" value="ECO:0007669"/>
    <property type="project" value="UniProtKB-SubCell"/>
</dbReference>
<dbReference type="GO" id="GO:0004459">
    <property type="term" value="F:L-lactate dehydrogenase activity"/>
    <property type="evidence" value="ECO:0007669"/>
    <property type="project" value="UniProtKB-UniRule"/>
</dbReference>
<dbReference type="GO" id="GO:0006096">
    <property type="term" value="P:glycolytic process"/>
    <property type="evidence" value="ECO:0007669"/>
    <property type="project" value="UniProtKB-UniRule"/>
</dbReference>
<dbReference type="GO" id="GO:0006089">
    <property type="term" value="P:lactate metabolic process"/>
    <property type="evidence" value="ECO:0007669"/>
    <property type="project" value="TreeGrafter"/>
</dbReference>
<dbReference type="CDD" id="cd05291">
    <property type="entry name" value="HicDH_like"/>
    <property type="match status" value="1"/>
</dbReference>
<dbReference type="FunFam" id="3.40.50.720:FF:000018">
    <property type="entry name" value="Malate dehydrogenase"/>
    <property type="match status" value="1"/>
</dbReference>
<dbReference type="Gene3D" id="3.90.110.10">
    <property type="entry name" value="Lactate dehydrogenase/glycoside hydrolase, family 4, C-terminal"/>
    <property type="match status" value="1"/>
</dbReference>
<dbReference type="Gene3D" id="3.40.50.720">
    <property type="entry name" value="NAD(P)-binding Rossmann-like Domain"/>
    <property type="match status" value="1"/>
</dbReference>
<dbReference type="HAMAP" id="MF_00488">
    <property type="entry name" value="Lactate_dehydrog"/>
    <property type="match status" value="1"/>
</dbReference>
<dbReference type="InterPro" id="IPR001557">
    <property type="entry name" value="L-lactate/malate_DH"/>
</dbReference>
<dbReference type="InterPro" id="IPR011304">
    <property type="entry name" value="L-lactate_DH"/>
</dbReference>
<dbReference type="InterPro" id="IPR018177">
    <property type="entry name" value="L-lactate_DH_AS"/>
</dbReference>
<dbReference type="InterPro" id="IPR022383">
    <property type="entry name" value="Lactate/malate_DH_C"/>
</dbReference>
<dbReference type="InterPro" id="IPR001236">
    <property type="entry name" value="Lactate/malate_DH_N"/>
</dbReference>
<dbReference type="InterPro" id="IPR015955">
    <property type="entry name" value="Lactate_DH/Glyco_Ohase_4_C"/>
</dbReference>
<dbReference type="InterPro" id="IPR036291">
    <property type="entry name" value="NAD(P)-bd_dom_sf"/>
</dbReference>
<dbReference type="NCBIfam" id="TIGR01771">
    <property type="entry name" value="L-LDH-NAD"/>
    <property type="match status" value="1"/>
</dbReference>
<dbReference type="NCBIfam" id="NF000824">
    <property type="entry name" value="PRK00066.1"/>
    <property type="match status" value="1"/>
</dbReference>
<dbReference type="PANTHER" id="PTHR43128">
    <property type="entry name" value="L-2-HYDROXYCARBOXYLATE DEHYDROGENASE (NAD(P)(+))"/>
    <property type="match status" value="1"/>
</dbReference>
<dbReference type="PANTHER" id="PTHR43128:SF16">
    <property type="entry name" value="L-LACTATE DEHYDROGENASE"/>
    <property type="match status" value="1"/>
</dbReference>
<dbReference type="Pfam" id="PF02866">
    <property type="entry name" value="Ldh_1_C"/>
    <property type="match status" value="1"/>
</dbReference>
<dbReference type="Pfam" id="PF00056">
    <property type="entry name" value="Ldh_1_N"/>
    <property type="match status" value="1"/>
</dbReference>
<dbReference type="PIRSF" id="PIRSF000102">
    <property type="entry name" value="Lac_mal_DH"/>
    <property type="match status" value="1"/>
</dbReference>
<dbReference type="PRINTS" id="PR00086">
    <property type="entry name" value="LLDHDRGNASE"/>
</dbReference>
<dbReference type="SUPFAM" id="SSF56327">
    <property type="entry name" value="LDH C-terminal domain-like"/>
    <property type="match status" value="1"/>
</dbReference>
<dbReference type="SUPFAM" id="SSF51735">
    <property type="entry name" value="NAD(P)-binding Rossmann-fold domains"/>
    <property type="match status" value="1"/>
</dbReference>
<dbReference type="PROSITE" id="PS00064">
    <property type="entry name" value="L_LDH"/>
    <property type="match status" value="1"/>
</dbReference>
<sequence length="319" mass="34432">MKTFGKKVVLIGDGSVGSSYAFAMVTQGVADEFVIIDIAKDKVKADVQDLNHGTVHSPSPVDVKAGEYEDCKDADLVVITAGAPQKPGETRLQLVEKNTKIMKSIVKSVMDSGFDGYFLIAANPVDILTRFVKEYTGLPAERVIGSGTVLDSARLQYLISQELGVAPSSVDASIIGEHGDTELAVWSQANVAGISVYDTLKEQTGSEAKAEEIYVNTRDAAYEIIQAKGSTYYGIALALMRISKAILNNENNVLNVSIQLDGQYGGHKGVYLGVPTLVNQHGAVKIYEMPLSAEEQALFDKSVKILEDTFDSIKYLLED</sequence>
<accession>P65258</accession>
<accession>Q99R35</accession>
<organism>
    <name type="scientific">Staphylococcus aureus (strain Mu50 / ATCC 700699)</name>
    <dbReference type="NCBI Taxonomy" id="158878"/>
    <lineage>
        <taxon>Bacteria</taxon>
        <taxon>Bacillati</taxon>
        <taxon>Bacillota</taxon>
        <taxon>Bacilli</taxon>
        <taxon>Bacillales</taxon>
        <taxon>Staphylococcaceae</taxon>
        <taxon>Staphylococcus</taxon>
    </lineage>
</organism>